<proteinExistence type="inferred from homology"/>
<feature type="chain" id="PRO_1000144879" description="Probable lipid kinase YegS">
    <location>
        <begin position="1"/>
        <end position="299"/>
    </location>
</feature>
<feature type="domain" description="DAGKc" evidence="1">
    <location>
        <begin position="2"/>
        <end position="133"/>
    </location>
</feature>
<feature type="active site" description="Proton acceptor" evidence="1">
    <location>
        <position position="271"/>
    </location>
</feature>
<feature type="binding site" evidence="1">
    <location>
        <position position="40"/>
    </location>
    <ligand>
        <name>ATP</name>
        <dbReference type="ChEBI" id="CHEBI:30616"/>
    </ligand>
</feature>
<feature type="binding site" evidence="1">
    <location>
        <begin position="66"/>
        <end position="72"/>
    </location>
    <ligand>
        <name>ATP</name>
        <dbReference type="ChEBI" id="CHEBI:30616"/>
    </ligand>
</feature>
<feature type="binding site" evidence="1">
    <location>
        <position position="95"/>
    </location>
    <ligand>
        <name>ATP</name>
        <dbReference type="ChEBI" id="CHEBI:30616"/>
    </ligand>
</feature>
<feature type="binding site" evidence="1">
    <location>
        <position position="215"/>
    </location>
    <ligand>
        <name>Mg(2+)</name>
        <dbReference type="ChEBI" id="CHEBI:18420"/>
    </ligand>
</feature>
<feature type="binding site" evidence="1">
    <location>
        <position position="218"/>
    </location>
    <ligand>
        <name>Mg(2+)</name>
        <dbReference type="ChEBI" id="CHEBI:18420"/>
    </ligand>
</feature>
<feature type="binding site" evidence="1">
    <location>
        <position position="220"/>
    </location>
    <ligand>
        <name>Mg(2+)</name>
        <dbReference type="ChEBI" id="CHEBI:18420"/>
    </ligand>
</feature>
<name>YEGS_SHIB3</name>
<dbReference type="EC" id="2.7.1.-" evidence="1"/>
<dbReference type="EMBL" id="CP001063">
    <property type="protein sequence ID" value="ACD09071.1"/>
    <property type="molecule type" value="Genomic_DNA"/>
</dbReference>
<dbReference type="RefSeq" id="WP_000807346.1">
    <property type="nucleotide sequence ID" value="NC_010658.1"/>
</dbReference>
<dbReference type="SMR" id="B2TY99"/>
<dbReference type="STRING" id="344609.SbBS512_E1149"/>
<dbReference type="KEGG" id="sbc:SbBS512_E1149"/>
<dbReference type="HOGENOM" id="CLU_045532_1_1_6"/>
<dbReference type="Proteomes" id="UP000001030">
    <property type="component" value="Chromosome"/>
</dbReference>
<dbReference type="GO" id="GO:0005737">
    <property type="term" value="C:cytoplasm"/>
    <property type="evidence" value="ECO:0007669"/>
    <property type="project" value="UniProtKB-SubCell"/>
</dbReference>
<dbReference type="GO" id="GO:0005886">
    <property type="term" value="C:plasma membrane"/>
    <property type="evidence" value="ECO:0007669"/>
    <property type="project" value="TreeGrafter"/>
</dbReference>
<dbReference type="GO" id="GO:0005524">
    <property type="term" value="F:ATP binding"/>
    <property type="evidence" value="ECO:0007669"/>
    <property type="project" value="UniProtKB-UniRule"/>
</dbReference>
<dbReference type="GO" id="GO:0001727">
    <property type="term" value="F:lipid kinase activity"/>
    <property type="evidence" value="ECO:0007669"/>
    <property type="project" value="UniProtKB-UniRule"/>
</dbReference>
<dbReference type="GO" id="GO:0000287">
    <property type="term" value="F:magnesium ion binding"/>
    <property type="evidence" value="ECO:0007669"/>
    <property type="project" value="UniProtKB-UniRule"/>
</dbReference>
<dbReference type="GO" id="GO:0008654">
    <property type="term" value="P:phospholipid biosynthetic process"/>
    <property type="evidence" value="ECO:0007669"/>
    <property type="project" value="UniProtKB-UniRule"/>
</dbReference>
<dbReference type="FunFam" id="2.60.200.40:FF:000008">
    <property type="entry name" value="Probable lipid kinase YegS"/>
    <property type="match status" value="1"/>
</dbReference>
<dbReference type="FunFam" id="3.40.50.10330:FF:000008">
    <property type="entry name" value="Probable lipid kinase YegS"/>
    <property type="match status" value="1"/>
</dbReference>
<dbReference type="Gene3D" id="2.60.200.40">
    <property type="match status" value="1"/>
</dbReference>
<dbReference type="Gene3D" id="3.40.50.10330">
    <property type="entry name" value="Probable inorganic polyphosphate/atp-NAD kinase, domain 1"/>
    <property type="match status" value="1"/>
</dbReference>
<dbReference type="HAMAP" id="MF_01377">
    <property type="entry name" value="YegS"/>
    <property type="match status" value="1"/>
</dbReference>
<dbReference type="InterPro" id="IPR017438">
    <property type="entry name" value="ATP-NAD_kinase_N"/>
</dbReference>
<dbReference type="InterPro" id="IPR005218">
    <property type="entry name" value="Diacylglycerol/lipid_kinase"/>
</dbReference>
<dbReference type="InterPro" id="IPR001206">
    <property type="entry name" value="Diacylglycerol_kinase_cat_dom"/>
</dbReference>
<dbReference type="InterPro" id="IPR022433">
    <property type="entry name" value="Lip_kinase_YegS"/>
</dbReference>
<dbReference type="InterPro" id="IPR050187">
    <property type="entry name" value="Lipid_Phosphate_FormReg"/>
</dbReference>
<dbReference type="InterPro" id="IPR016064">
    <property type="entry name" value="NAD/diacylglycerol_kinase_sf"/>
</dbReference>
<dbReference type="InterPro" id="IPR045540">
    <property type="entry name" value="YegS/DAGK_C"/>
</dbReference>
<dbReference type="NCBIfam" id="TIGR03702">
    <property type="entry name" value="lip_kinase_YegS"/>
    <property type="match status" value="1"/>
</dbReference>
<dbReference type="NCBIfam" id="NF009602">
    <property type="entry name" value="PRK13054.1"/>
    <property type="match status" value="1"/>
</dbReference>
<dbReference type="NCBIfam" id="TIGR00147">
    <property type="entry name" value="YegS/Rv2252/BmrU family lipid kinase"/>
    <property type="match status" value="1"/>
</dbReference>
<dbReference type="PANTHER" id="PTHR12358:SF106">
    <property type="entry name" value="LIPID KINASE YEGS"/>
    <property type="match status" value="1"/>
</dbReference>
<dbReference type="PANTHER" id="PTHR12358">
    <property type="entry name" value="SPHINGOSINE KINASE"/>
    <property type="match status" value="1"/>
</dbReference>
<dbReference type="Pfam" id="PF00781">
    <property type="entry name" value="DAGK_cat"/>
    <property type="match status" value="1"/>
</dbReference>
<dbReference type="Pfam" id="PF19279">
    <property type="entry name" value="YegS_C"/>
    <property type="match status" value="1"/>
</dbReference>
<dbReference type="SMART" id="SM00046">
    <property type="entry name" value="DAGKc"/>
    <property type="match status" value="1"/>
</dbReference>
<dbReference type="SUPFAM" id="SSF111331">
    <property type="entry name" value="NAD kinase/diacylglycerol kinase-like"/>
    <property type="match status" value="1"/>
</dbReference>
<dbReference type="PROSITE" id="PS50146">
    <property type="entry name" value="DAGK"/>
    <property type="match status" value="1"/>
</dbReference>
<accession>B2TY99</accession>
<organism>
    <name type="scientific">Shigella boydii serotype 18 (strain CDC 3083-94 / BS512)</name>
    <dbReference type="NCBI Taxonomy" id="344609"/>
    <lineage>
        <taxon>Bacteria</taxon>
        <taxon>Pseudomonadati</taxon>
        <taxon>Pseudomonadota</taxon>
        <taxon>Gammaproteobacteria</taxon>
        <taxon>Enterobacterales</taxon>
        <taxon>Enterobacteriaceae</taxon>
        <taxon>Shigella</taxon>
    </lineage>
</organism>
<keyword id="KW-0067">ATP-binding</keyword>
<keyword id="KW-0963">Cytoplasm</keyword>
<keyword id="KW-0418">Kinase</keyword>
<keyword id="KW-0444">Lipid biosynthesis</keyword>
<keyword id="KW-0443">Lipid metabolism</keyword>
<keyword id="KW-0460">Magnesium</keyword>
<keyword id="KW-0479">Metal-binding</keyword>
<keyword id="KW-0547">Nucleotide-binding</keyword>
<keyword id="KW-0594">Phospholipid biosynthesis</keyword>
<keyword id="KW-1208">Phospholipid metabolism</keyword>
<keyword id="KW-1185">Reference proteome</keyword>
<keyword id="KW-0808">Transferase</keyword>
<comment type="function">
    <text evidence="1">Probably phosphorylates lipids; the in vivo substrate is unknown.</text>
</comment>
<comment type="cofactor">
    <cofactor evidence="1">
        <name>Mg(2+)</name>
        <dbReference type="ChEBI" id="CHEBI:18420"/>
    </cofactor>
    <cofactor evidence="1">
        <name>Ca(2+)</name>
        <dbReference type="ChEBI" id="CHEBI:29108"/>
    </cofactor>
    <text evidence="1">Binds 1 Mg(2+) ion per subunit. Ca(2+) may be able to substitute.</text>
</comment>
<comment type="subcellular location">
    <subcellularLocation>
        <location evidence="1">Cytoplasm</location>
    </subcellularLocation>
</comment>
<comment type="similarity">
    <text evidence="1">Belongs to the diacylglycerol/lipid kinase family. YegS lipid kinase subfamily.</text>
</comment>
<evidence type="ECO:0000255" key="1">
    <source>
        <dbReference type="HAMAP-Rule" id="MF_01377"/>
    </source>
</evidence>
<reference key="1">
    <citation type="submission" date="2008-05" db="EMBL/GenBank/DDBJ databases">
        <title>Complete sequence of Shigella boydii serotype 18 strain BS512.</title>
        <authorList>
            <person name="Rasko D.A."/>
            <person name="Rosovitz M."/>
            <person name="Maurelli A.T."/>
            <person name="Myers G."/>
            <person name="Seshadri R."/>
            <person name="Cer R."/>
            <person name="Jiang L."/>
            <person name="Ravel J."/>
            <person name="Sebastian Y."/>
        </authorList>
    </citation>
    <scope>NUCLEOTIDE SEQUENCE [LARGE SCALE GENOMIC DNA]</scope>
    <source>
        <strain>CDC 3083-94 / BS512</strain>
    </source>
</reference>
<sequence>MAEFPASLLILNGKSTDNLPLREAIMLLREEGMTIHVRVTWEKGDAARFVEEARKLGVATVIAGGGDGTINEVSTALIQCEGDDIPALGILPLGTANDFATSVGIPEALDKALKLAIAGNAIAIDMAQVNKQTCFINMATGGFGTRITTETPEKLKAALGGVSYIIHGLMRMDTLQPDRCEIRGENFHWQGDALVIGIGNGRQAGGGQQLCPNALINDGLLQLRIFTGDEILPALVSTLKSDEDNPNIIEGASSWFDIQAPHEITFNLDGEPLSGQNFHIEILPAALRCRLPPDCPLLR</sequence>
<protein>
    <recommendedName>
        <fullName evidence="1">Probable lipid kinase YegS</fullName>
        <ecNumber evidence="1">2.7.1.-</ecNumber>
    </recommendedName>
</protein>
<gene>
    <name evidence="1" type="primary">yegS</name>
    <name type="ordered locus">SbBS512_E1149</name>
</gene>